<accession>Q03570</accession>
<accession>D2Y8V9</accession>
<accession>P34581</accession>
<accession>P39218</accession>
<gene>
    <name type="primary">rgr-1</name>
    <name type="synonym">mdt-14</name>
    <name type="ORF">C38C10.5</name>
</gene>
<protein>
    <recommendedName>
        <fullName>Mediator of RNA polymerase II transcription subunit 14</fullName>
    </recommendedName>
    <alternativeName>
        <fullName>Mediator complex subunit 14</fullName>
    </alternativeName>
    <alternativeName>
        <fullName>Mediator complex subunit rgr-1</fullName>
    </alternativeName>
</protein>
<dbReference type="EMBL" id="Z19153">
    <property type="protein sequence ID" value="CAA79550.3"/>
    <property type="molecule type" value="Genomic_DNA"/>
</dbReference>
<dbReference type="EMBL" id="Z29115">
    <property type="protein sequence ID" value="CAA79550.3"/>
    <property type="status" value="JOINED"/>
    <property type="molecule type" value="Genomic_DNA"/>
</dbReference>
<dbReference type="EMBL" id="Z19153">
    <property type="protein sequence ID" value="CAA79551.3"/>
    <property type="molecule type" value="Genomic_DNA"/>
</dbReference>
<dbReference type="EMBL" id="Z29115">
    <property type="protein sequence ID" value="CAA79551.3"/>
    <property type="status" value="JOINED"/>
    <property type="molecule type" value="Genomic_DNA"/>
</dbReference>
<dbReference type="EMBL" id="Z19153">
    <property type="protein sequence ID" value="CBI83227.1"/>
    <property type="molecule type" value="Genomic_DNA"/>
</dbReference>
<dbReference type="EMBL" id="Z29115">
    <property type="protein sequence ID" value="CBI83227.1"/>
    <property type="status" value="JOINED"/>
    <property type="molecule type" value="Genomic_DNA"/>
</dbReference>
<dbReference type="PIR" id="A88554">
    <property type="entry name" value="A88554"/>
</dbReference>
<dbReference type="PIR" id="B88554">
    <property type="entry name" value="B88554"/>
</dbReference>
<dbReference type="PIR" id="S28289">
    <property type="entry name" value="S28289"/>
</dbReference>
<dbReference type="RefSeq" id="NP_001359524.1">
    <molecule id="Q03570-2"/>
    <property type="nucleotide sequence ID" value="NM_001372642.1"/>
</dbReference>
<dbReference type="RefSeq" id="NP_499067.3">
    <molecule id="Q03570-1"/>
    <property type="nucleotide sequence ID" value="NM_066666.5"/>
</dbReference>
<dbReference type="RefSeq" id="NP_499068.3">
    <property type="nucleotide sequence ID" value="NM_066667.4"/>
</dbReference>
<dbReference type="SMR" id="Q03570"/>
<dbReference type="BioGRID" id="41517">
    <property type="interactions" value="3"/>
</dbReference>
<dbReference type="FunCoup" id="Q03570">
    <property type="interactions" value="3347"/>
</dbReference>
<dbReference type="IntAct" id="Q03570">
    <property type="interactions" value="1"/>
</dbReference>
<dbReference type="STRING" id="6239.C38C10.5b.1"/>
<dbReference type="PaxDb" id="6239-C38C10.5c"/>
<dbReference type="PeptideAtlas" id="Q03570"/>
<dbReference type="EnsemblMetazoa" id="C38C10.5a.1">
    <molecule id="Q03570-2"/>
    <property type="protein sequence ID" value="C38C10.5a.1"/>
    <property type="gene ID" value="WBGene00004343"/>
</dbReference>
<dbReference type="EnsemblMetazoa" id="C38C10.5b.1">
    <molecule id="Q03570-1"/>
    <property type="protein sequence ID" value="C38C10.5b.1"/>
    <property type="gene ID" value="WBGene00004343"/>
</dbReference>
<dbReference type="GeneID" id="176320"/>
<dbReference type="KEGG" id="cel:CELE_C38C10.5"/>
<dbReference type="UCSC" id="C38C10.5b">
    <molecule id="Q03570-2"/>
    <property type="organism name" value="c. elegans"/>
</dbReference>
<dbReference type="AGR" id="WB:WBGene00004343"/>
<dbReference type="CTD" id="176320"/>
<dbReference type="WormBase" id="C38C10.5a">
    <molecule id="Q03570-2"/>
    <property type="protein sequence ID" value="CE44376"/>
    <property type="gene ID" value="WBGene00004343"/>
    <property type="gene designation" value="rgr-1"/>
</dbReference>
<dbReference type="WormBase" id="C38C10.5b">
    <molecule id="Q03570-1"/>
    <property type="protein sequence ID" value="CE44435"/>
    <property type="gene ID" value="WBGene00004343"/>
    <property type="gene designation" value="rgr-1"/>
</dbReference>
<dbReference type="eggNOG" id="KOG1875">
    <property type="taxonomic scope" value="Eukaryota"/>
</dbReference>
<dbReference type="GeneTree" id="ENSGT00390000001021"/>
<dbReference type="InParanoid" id="Q03570"/>
<dbReference type="OMA" id="RTRVIWP"/>
<dbReference type="OrthoDB" id="205099at2759"/>
<dbReference type="PhylomeDB" id="Q03570"/>
<dbReference type="PRO" id="PR:Q03570"/>
<dbReference type="Proteomes" id="UP000001940">
    <property type="component" value="Chromosome III"/>
</dbReference>
<dbReference type="Bgee" id="WBGene00004343">
    <property type="expression patterns" value="Expressed in embryo and 4 other cell types or tissues"/>
</dbReference>
<dbReference type="GO" id="GO:0070847">
    <property type="term" value="C:core mediator complex"/>
    <property type="evidence" value="ECO:0000318"/>
    <property type="project" value="GO_Central"/>
</dbReference>
<dbReference type="GO" id="GO:0016592">
    <property type="term" value="C:mediator complex"/>
    <property type="evidence" value="ECO:0000318"/>
    <property type="project" value="GO_Central"/>
</dbReference>
<dbReference type="GO" id="GO:0003712">
    <property type="term" value="F:transcription coregulator activity"/>
    <property type="evidence" value="ECO:0000318"/>
    <property type="project" value="GO_Central"/>
</dbReference>
<dbReference type="GO" id="GO:0006357">
    <property type="term" value="P:regulation of transcription by RNA polymerase II"/>
    <property type="evidence" value="ECO:0000318"/>
    <property type="project" value="GO_Central"/>
</dbReference>
<dbReference type="InterPro" id="IPR055122">
    <property type="entry name" value="Med14_N"/>
</dbReference>
<dbReference type="InterPro" id="IPR055113">
    <property type="entry name" value="Med14_RM2"/>
</dbReference>
<dbReference type="InterPro" id="IPR013947">
    <property type="entry name" value="Mediator_Med14"/>
</dbReference>
<dbReference type="InterPro" id="IPR056879">
    <property type="entry name" value="RM3_Med14"/>
</dbReference>
<dbReference type="PANTHER" id="PTHR12809">
    <property type="entry name" value="MEDIATOR COMPLEX SUBUNIT"/>
    <property type="match status" value="1"/>
</dbReference>
<dbReference type="PANTHER" id="PTHR12809:SF2">
    <property type="entry name" value="MEDIATOR OF RNA POLYMERASE II TRANSCRIPTION SUBUNIT 14"/>
    <property type="match status" value="1"/>
</dbReference>
<dbReference type="Pfam" id="PF08638">
    <property type="entry name" value="Med14"/>
    <property type="match status" value="1"/>
</dbReference>
<dbReference type="Pfam" id="PF25308">
    <property type="entry name" value="Rgr-1_C"/>
    <property type="match status" value="1"/>
</dbReference>
<dbReference type="Pfam" id="PF22981">
    <property type="entry name" value="RM2_Med14"/>
    <property type="match status" value="1"/>
</dbReference>
<dbReference type="Pfam" id="PF25065">
    <property type="entry name" value="RM3_Med14"/>
    <property type="match status" value="1"/>
</dbReference>
<proteinExistence type="inferred from homology"/>
<name>MED14_CAEEL</name>
<reference key="1">
    <citation type="journal article" date="1994" name="Nature">
        <title>2.2 Mb of contiguous nucleotide sequence from chromosome III of C. elegans.</title>
        <authorList>
            <person name="Wilson R."/>
            <person name="Ainscough R."/>
            <person name="Anderson K."/>
            <person name="Baynes C."/>
            <person name="Berks M."/>
            <person name="Bonfield J."/>
            <person name="Burton J."/>
            <person name="Connell M."/>
            <person name="Copsey T."/>
            <person name="Cooper J."/>
            <person name="Coulson A."/>
            <person name="Craxton M."/>
            <person name="Dear S."/>
            <person name="Du Z."/>
            <person name="Durbin R."/>
            <person name="Favello A."/>
            <person name="Fraser A."/>
            <person name="Fulton L."/>
            <person name="Gardner A."/>
            <person name="Green P."/>
            <person name="Hawkins T."/>
            <person name="Hillier L."/>
            <person name="Jier M."/>
            <person name="Johnston L."/>
            <person name="Jones M."/>
            <person name="Kershaw J."/>
            <person name="Kirsten J."/>
            <person name="Laisster N."/>
            <person name="Latreille P."/>
            <person name="Lightning J."/>
            <person name="Lloyd C."/>
            <person name="Mortimore B."/>
            <person name="O'Callaghan M."/>
            <person name="Parsons J."/>
            <person name="Percy C."/>
            <person name="Rifken L."/>
            <person name="Roopra A."/>
            <person name="Saunders D."/>
            <person name="Shownkeen R."/>
            <person name="Sims M."/>
            <person name="Smaldon N."/>
            <person name="Smith A."/>
            <person name="Smith M."/>
            <person name="Sonnhammer E."/>
            <person name="Staden R."/>
            <person name="Sulston J."/>
            <person name="Thierry-Mieg J."/>
            <person name="Thomas K."/>
            <person name="Vaudin M."/>
            <person name="Vaughan K."/>
            <person name="Waterston R."/>
            <person name="Watson A."/>
            <person name="Weinstock L."/>
            <person name="Wilkinson-Sproat J."/>
            <person name="Wohldman P."/>
        </authorList>
    </citation>
    <scope>NUCLEOTIDE SEQUENCE [LARGE SCALE GENOMIC DNA]</scope>
    <source>
        <strain>Bristol N2</strain>
    </source>
</reference>
<reference key="2">
    <citation type="journal article" date="1998" name="Science">
        <title>Genome sequence of the nematode C. elegans: a platform for investigating biology.</title>
        <authorList>
            <consortium name="The C. elegans sequencing consortium"/>
        </authorList>
    </citation>
    <scope>NUCLEOTIDE SEQUENCE [LARGE SCALE GENOMIC DNA]</scope>
    <scope>ALTERNATIVE SPLICING</scope>
    <source>
        <strain>Bristol N2</strain>
    </source>
</reference>
<reference key="3">
    <citation type="journal article" date="2002" name="J. Biol. Chem.">
        <title>Broad requirement for the mediator subunit RGR-1 for transcription in the Caenorhabditis elegans embryo.</title>
        <authorList>
            <person name="Shim E.Y."/>
            <person name="Walker A.K."/>
            <person name="Blackwell T.K."/>
        </authorList>
    </citation>
    <scope>FUNCTION</scope>
    <scope>SUBCELLULAR LOCATION</scope>
</reference>
<organism>
    <name type="scientific">Caenorhabditis elegans</name>
    <dbReference type="NCBI Taxonomy" id="6239"/>
    <lineage>
        <taxon>Eukaryota</taxon>
        <taxon>Metazoa</taxon>
        <taxon>Ecdysozoa</taxon>
        <taxon>Nematoda</taxon>
        <taxon>Chromadorea</taxon>
        <taxon>Rhabditida</taxon>
        <taxon>Rhabditina</taxon>
        <taxon>Rhabditomorpha</taxon>
        <taxon>Rhabditoidea</taxon>
        <taxon>Rhabditidae</taxon>
        <taxon>Peloderinae</taxon>
        <taxon>Caenorhabditis</taxon>
    </lineage>
</organism>
<comment type="function">
    <text evidence="1 3">Component of the Mediator complex, a coactivator involved in the regulated transcription of nearly all RNA polymerase II-dependent genes. Mediator functions as a bridge to convey information from gene-specific regulatory proteins to the basal RNA polymerase II transcription machinery. Mediator is recruited to promoters by direct interactions with regulatory proteins and serves as a scaffold for the assembly of a functional preinitiation complex with RNA polymerase II and the general transcription factors (By similarity). Required for transcription in the embryo and for phosphorylation of the RNA polymerase II C-terminal domain repeat.</text>
</comment>
<comment type="subunit">
    <text evidence="1">Component of the Mediator complex.</text>
</comment>
<comment type="subcellular location">
    <subcellularLocation>
        <location evidence="3">Nucleus</location>
    </subcellularLocation>
</comment>
<comment type="alternative products">
    <event type="alternative splicing"/>
    <isoform>
        <id>Q03570-3</id>
        <name>c</name>
        <sequence type="displayed"/>
    </isoform>
    <isoform>
        <id>Q03570-2</id>
        <name>a</name>
        <sequence type="described" ref="VSP_038712 VSP_002442"/>
    </isoform>
    <isoform>
        <id>Q03570-1</id>
        <name>b</name>
        <sequence type="described" ref="VSP_038712"/>
    </isoform>
</comment>
<comment type="similarity">
    <text evidence="4">Belongs to the Mediator complex subunit 14 family.</text>
</comment>
<evidence type="ECO:0000250" key="1"/>
<evidence type="ECO:0000256" key="2">
    <source>
        <dbReference type="SAM" id="MobiDB-lite"/>
    </source>
</evidence>
<evidence type="ECO:0000269" key="3">
    <source>
    </source>
</evidence>
<evidence type="ECO:0000305" key="4"/>
<keyword id="KW-0010">Activator</keyword>
<keyword id="KW-0025">Alternative splicing</keyword>
<keyword id="KW-0539">Nucleus</keyword>
<keyword id="KW-1185">Reference proteome</keyword>
<keyword id="KW-0804">Transcription</keyword>
<keyword id="KW-0805">Transcription regulation</keyword>
<feature type="chain" id="PRO_0000096360" description="Mediator of RNA polymerase II transcription subunit 14">
    <location>
        <begin position="1"/>
        <end position="1516"/>
    </location>
</feature>
<feature type="region of interest" description="Disordered" evidence="2">
    <location>
        <begin position="22"/>
        <end position="98"/>
    </location>
</feature>
<feature type="region of interest" description="Disordered" evidence="2">
    <location>
        <begin position="1434"/>
        <end position="1516"/>
    </location>
</feature>
<feature type="compositionally biased region" description="Low complexity" evidence="2">
    <location>
        <begin position="34"/>
        <end position="47"/>
    </location>
</feature>
<feature type="compositionally biased region" description="Basic and acidic residues" evidence="2">
    <location>
        <begin position="72"/>
        <end position="83"/>
    </location>
</feature>
<feature type="compositionally biased region" description="Low complexity" evidence="2">
    <location>
        <begin position="1463"/>
        <end position="1473"/>
    </location>
</feature>
<feature type="compositionally biased region" description="Gly residues" evidence="2">
    <location>
        <begin position="1474"/>
        <end position="1483"/>
    </location>
</feature>
<feature type="compositionally biased region" description="Low complexity" evidence="2">
    <location>
        <begin position="1502"/>
        <end position="1516"/>
    </location>
</feature>
<feature type="splice variant" id="VSP_038712" description="In isoform a and isoform b." evidence="4">
    <location>
        <begin position="1"/>
        <end position="128"/>
    </location>
</feature>
<feature type="splice variant" id="VSP_002442" description="In isoform a." evidence="4">
    <location>
        <begin position="796"/>
        <end position="801"/>
    </location>
</feature>
<sequence length="1516" mass="170401">MSSNVLPMYASTPSRAFAHSKLSSQLRAALADNSPAAPISPAPSGSALSLDESSGISDRDVHSSQEQTAHLSEVDVKSIHSSDSEDEPAQNPLPEVPANCGPPTIPLNVLLDFAIQHVYHEITVLAELMQRKTNDQGEQERKMSLVHFAHATRSQFLKLVALVKWIRISKRMDVCYSIDYLLDLQSQYFIDTADRLVAMTRGDLELARLPEYHIAPAIDVLVLGTYNRMPSKIKEAFIPPAKITPREQKLVTSRLNQLIESRLSRLSSGIPPNIKEIHINNGLATLLVPGEFEIKITLLGETEMTKWTLLNIKILVEDYELGMGLPLVHPLQLNQLHGVLQSRMNVSLNPIKEAFSFLHSFCVSLQLDVLFCQTSRLAAGRLRDNITIEKYDPKERVLVVGYWVKRSKSRRLTVGQVKCDAQYRVQIYEDPNDKLGGLKVRHFPHAPQLGRLDSGAGMLSIDRLLSETYVVRCKERLMRLRRILEAAEPRLEVKMTGISAPSLSLALLPDTSSKDEMMTVSVNSFCGKVLCNVHILSAEHEDVLAFGKALYSSQCSAHTIQMYLRKLRVALVIERYRRSVKALPVREVQEAELLPFAKECLGDAPAQRIILQFLRSEDYYLLVTFSPDEKAVVKTHIQLLEVVGDRAQFIQLEDDEMNGMHVKEAINQGTMRFSPSHKTSLQEECSREQRLAFAVATVEDRITYMYLAAELMKKGIGVDVRKDSAHVPGGLALHITDVKNVVPFEASEFFECCIRCCLRLDNRNRYTFQFEMCFENIPLVRDVPHGLPHRRDGEPKDRTSKDATWLQELNHINQSSPEKLVELIIHRLMRYLYMYKVVHQFSLAYEKHFKNYCNIEAYTFHKLVVSYGDNRDMLMILAFNVKSQAPGSSEDFFFLNFGQSMPHRQFNSTEIDWHQKPRWNPHSMMSQLMRDDLKETNDLVFTMHFLCETIRPLVAIGNFSRIRFQSQKSLSQLIGPDVHFPFRLKYHLYALDQTTLRLMQGNVILEIKLLEGCKIAVRDVSRYRPRCAGLFQLFSNIDSETTAIMNDEIAIPQSDNPQTAGPTMWTPEQFMDSLDERPEEIDPRMAITSQPILMSHDTIIKACDFKDTEGRITCPLDEYLCSISYLQRALLTLERMSPRATLNKNSSSNLSCGFVTIIDAKPDFIRFRASQMNGDGVNATSMVHYKIYLCPVAMTLKIRIEFEEGTNSAATADNLKTLTTYFEKVVFPCGDEYALQSYICLTRLTSFEATQSIANLMNVQMEHPPTSKCCVQLSLTYNNTSTKKLAPATKVDQPLQNIIFNVIVSQSRTSESFSVLRFIYRIKENFVVVPSANEKNKQMADEVNAETKTSGGNPIWNLVRLVMDRFNSGDWNPGNRDEPIISSVAPPTYVNPGSVAGPSSVAAPGSVSIQQPGSVLQPGSMMGPQSVNALQYGMHRQPMGGPQSMQMNPSSVGQPGSVGGPGSHQQHMMNPGSVGPGSVGGPGSVNPGSVGYPQWNPPSVGQSYHHPLHHQQYPPQ</sequence>